<evidence type="ECO:0000255" key="1">
    <source>
        <dbReference type="HAMAP-Rule" id="MF_00254"/>
    </source>
</evidence>
<name>SYGA_HELPG</name>
<keyword id="KW-0030">Aminoacyl-tRNA synthetase</keyword>
<keyword id="KW-0067">ATP-binding</keyword>
<keyword id="KW-0963">Cytoplasm</keyword>
<keyword id="KW-0436">Ligase</keyword>
<keyword id="KW-0547">Nucleotide-binding</keyword>
<keyword id="KW-0648">Protein biosynthesis</keyword>
<keyword id="KW-1185">Reference proteome</keyword>
<gene>
    <name evidence="1" type="primary">glyQ</name>
    <name type="ordered locus">HPG27_908</name>
</gene>
<reference key="1">
    <citation type="journal article" date="2009" name="J. Bacteriol.">
        <title>The complete genome sequence of Helicobacter pylori strain G27.</title>
        <authorList>
            <person name="Baltrus D.A."/>
            <person name="Amieva M.R."/>
            <person name="Covacci A."/>
            <person name="Lowe T.M."/>
            <person name="Merrell D.S."/>
            <person name="Ottemann K.M."/>
            <person name="Stein M."/>
            <person name="Salama N.R."/>
            <person name="Guillemin K."/>
        </authorList>
    </citation>
    <scope>NUCLEOTIDE SEQUENCE [LARGE SCALE GENOMIC DNA]</scope>
    <source>
        <strain>G27</strain>
    </source>
</reference>
<sequence>MQDFSSLLLKLQEYWKNQGCLVIQPYDIPAGAGTFHPATLLRSLDKKPWNVAYVAPSRRPTDGRYGENPNRLGSYYQFQVVIKPSPSNIQELYLKSLEVLGINLNEHDIRFVEDNWESPTLGAWGLGWEVWLDGMEVTQFTYFQQVGGIACSPIPVEITYGLERLAMYVQKVENILEIEWAKNNHDSVRYAQVHLESEYQFSKYHFEVASVTRLLEMFKNAQAEALHCLKNKLPLPAYDLVMLCSHFFNILDARKAISVAERQNYILQIRDLAKGCTILYKEQEEEREERLKNALTKA</sequence>
<feature type="chain" id="PRO_1000101201" description="Glycine--tRNA ligase alpha subunit">
    <location>
        <begin position="1"/>
        <end position="298"/>
    </location>
</feature>
<comment type="catalytic activity">
    <reaction evidence="1">
        <text>tRNA(Gly) + glycine + ATP = glycyl-tRNA(Gly) + AMP + diphosphate</text>
        <dbReference type="Rhea" id="RHEA:16013"/>
        <dbReference type="Rhea" id="RHEA-COMP:9664"/>
        <dbReference type="Rhea" id="RHEA-COMP:9683"/>
        <dbReference type="ChEBI" id="CHEBI:30616"/>
        <dbReference type="ChEBI" id="CHEBI:33019"/>
        <dbReference type="ChEBI" id="CHEBI:57305"/>
        <dbReference type="ChEBI" id="CHEBI:78442"/>
        <dbReference type="ChEBI" id="CHEBI:78522"/>
        <dbReference type="ChEBI" id="CHEBI:456215"/>
        <dbReference type="EC" id="6.1.1.14"/>
    </reaction>
</comment>
<comment type="subunit">
    <text evidence="1">Tetramer of two alpha and two beta subunits.</text>
</comment>
<comment type="subcellular location">
    <subcellularLocation>
        <location evidence="1">Cytoplasm</location>
    </subcellularLocation>
</comment>
<comment type="similarity">
    <text evidence="1">Belongs to the class-II aminoacyl-tRNA synthetase family.</text>
</comment>
<proteinExistence type="inferred from homology"/>
<protein>
    <recommendedName>
        <fullName evidence="1">Glycine--tRNA ligase alpha subunit</fullName>
        <ecNumber evidence="1">6.1.1.14</ecNumber>
    </recommendedName>
    <alternativeName>
        <fullName evidence="1">Glycyl-tRNA synthetase alpha subunit</fullName>
        <shortName evidence="1">GlyRS</shortName>
    </alternativeName>
</protein>
<dbReference type="EC" id="6.1.1.14" evidence="1"/>
<dbReference type="EMBL" id="CP001173">
    <property type="protein sequence ID" value="ACI27662.1"/>
    <property type="molecule type" value="Genomic_DNA"/>
</dbReference>
<dbReference type="RefSeq" id="WP_001150924.1">
    <property type="nucleotide sequence ID" value="NC_011333.1"/>
</dbReference>
<dbReference type="SMR" id="B5Z7W3"/>
<dbReference type="KEGG" id="hpg:HPG27_908"/>
<dbReference type="HOGENOM" id="CLU_057066_1_0_7"/>
<dbReference type="Proteomes" id="UP000001735">
    <property type="component" value="Chromosome"/>
</dbReference>
<dbReference type="GO" id="GO:0005829">
    <property type="term" value="C:cytosol"/>
    <property type="evidence" value="ECO:0007669"/>
    <property type="project" value="TreeGrafter"/>
</dbReference>
<dbReference type="GO" id="GO:0005524">
    <property type="term" value="F:ATP binding"/>
    <property type="evidence" value="ECO:0007669"/>
    <property type="project" value="UniProtKB-UniRule"/>
</dbReference>
<dbReference type="GO" id="GO:0004820">
    <property type="term" value="F:glycine-tRNA ligase activity"/>
    <property type="evidence" value="ECO:0007669"/>
    <property type="project" value="UniProtKB-UniRule"/>
</dbReference>
<dbReference type="GO" id="GO:0006426">
    <property type="term" value="P:glycyl-tRNA aminoacylation"/>
    <property type="evidence" value="ECO:0007669"/>
    <property type="project" value="UniProtKB-UniRule"/>
</dbReference>
<dbReference type="CDD" id="cd00733">
    <property type="entry name" value="GlyRS_alpha_core"/>
    <property type="match status" value="1"/>
</dbReference>
<dbReference type="FunFam" id="3.30.930.10:FF:000006">
    <property type="entry name" value="Glycine--tRNA ligase alpha subunit"/>
    <property type="match status" value="1"/>
</dbReference>
<dbReference type="Gene3D" id="3.30.930.10">
    <property type="entry name" value="Bira Bifunctional Protein, Domain 2"/>
    <property type="match status" value="1"/>
</dbReference>
<dbReference type="Gene3D" id="1.20.58.180">
    <property type="entry name" value="Class II aaRS and biotin synthetases, domain 2"/>
    <property type="match status" value="1"/>
</dbReference>
<dbReference type="HAMAP" id="MF_00254">
    <property type="entry name" value="Gly_tRNA_synth_alpha"/>
    <property type="match status" value="1"/>
</dbReference>
<dbReference type="InterPro" id="IPR045864">
    <property type="entry name" value="aa-tRNA-synth_II/BPL/LPL"/>
</dbReference>
<dbReference type="InterPro" id="IPR006194">
    <property type="entry name" value="Gly-tRNA-synth_heterodimer"/>
</dbReference>
<dbReference type="InterPro" id="IPR002310">
    <property type="entry name" value="Gly-tRNA_ligase_asu"/>
</dbReference>
<dbReference type="NCBIfam" id="TIGR00388">
    <property type="entry name" value="glyQ"/>
    <property type="match status" value="1"/>
</dbReference>
<dbReference type="NCBIfam" id="NF006827">
    <property type="entry name" value="PRK09348.1"/>
    <property type="match status" value="1"/>
</dbReference>
<dbReference type="PANTHER" id="PTHR30075:SF2">
    <property type="entry name" value="GLYCINE--TRNA LIGASE, CHLOROPLASTIC_MITOCHONDRIAL 2"/>
    <property type="match status" value="1"/>
</dbReference>
<dbReference type="PANTHER" id="PTHR30075">
    <property type="entry name" value="GLYCYL-TRNA SYNTHETASE"/>
    <property type="match status" value="1"/>
</dbReference>
<dbReference type="Pfam" id="PF02091">
    <property type="entry name" value="tRNA-synt_2e"/>
    <property type="match status" value="1"/>
</dbReference>
<dbReference type="PRINTS" id="PR01044">
    <property type="entry name" value="TRNASYNTHGA"/>
</dbReference>
<dbReference type="SUPFAM" id="SSF55681">
    <property type="entry name" value="Class II aaRS and biotin synthetases"/>
    <property type="match status" value="1"/>
</dbReference>
<dbReference type="PROSITE" id="PS50861">
    <property type="entry name" value="AA_TRNA_LIGASE_II_GLYAB"/>
    <property type="match status" value="1"/>
</dbReference>
<accession>B5Z7W3</accession>
<organism>
    <name type="scientific">Helicobacter pylori (strain G27)</name>
    <dbReference type="NCBI Taxonomy" id="563041"/>
    <lineage>
        <taxon>Bacteria</taxon>
        <taxon>Pseudomonadati</taxon>
        <taxon>Campylobacterota</taxon>
        <taxon>Epsilonproteobacteria</taxon>
        <taxon>Campylobacterales</taxon>
        <taxon>Helicobacteraceae</taxon>
        <taxon>Helicobacter</taxon>
    </lineage>
</organism>